<feature type="chain" id="PRO_0000177909" description="D-alanine--D-alanine ligase B">
    <location>
        <begin position="1"/>
        <end position="318"/>
    </location>
</feature>
<feature type="domain" description="ATP-grasp" evidence="2">
    <location>
        <begin position="117"/>
        <end position="315"/>
    </location>
</feature>
<feature type="binding site" evidence="2">
    <location>
        <begin position="146"/>
        <end position="201"/>
    </location>
    <ligand>
        <name>ATP</name>
        <dbReference type="ChEBI" id="CHEBI:30616"/>
    </ligand>
</feature>
<feature type="binding site" evidence="2">
    <location>
        <position position="268"/>
    </location>
    <ligand>
        <name>Mg(2+)</name>
        <dbReference type="ChEBI" id="CHEBI:18420"/>
        <label>1</label>
    </ligand>
</feature>
<feature type="binding site" evidence="2">
    <location>
        <position position="282"/>
    </location>
    <ligand>
        <name>Mg(2+)</name>
        <dbReference type="ChEBI" id="CHEBI:18420"/>
        <label>1</label>
    </ligand>
</feature>
<feature type="binding site" evidence="2">
    <location>
        <position position="282"/>
    </location>
    <ligand>
        <name>Mg(2+)</name>
        <dbReference type="ChEBI" id="CHEBI:18420"/>
        <label>2</label>
    </ligand>
</feature>
<feature type="binding site" evidence="2">
    <location>
        <position position="284"/>
    </location>
    <ligand>
        <name>Mg(2+)</name>
        <dbReference type="ChEBI" id="CHEBI:18420"/>
        <label>2</label>
    </ligand>
</feature>
<organism>
    <name type="scientific">Xanthomonas campestris pv. campestris (strain ATCC 33913 / DSM 3586 / NCPPB 528 / LMG 568 / P 25)</name>
    <dbReference type="NCBI Taxonomy" id="190485"/>
    <lineage>
        <taxon>Bacteria</taxon>
        <taxon>Pseudomonadati</taxon>
        <taxon>Pseudomonadota</taxon>
        <taxon>Gammaproteobacteria</taxon>
        <taxon>Lysobacterales</taxon>
        <taxon>Lysobacteraceae</taxon>
        <taxon>Xanthomonas</taxon>
    </lineage>
</organism>
<dbReference type="EC" id="6.3.2.4" evidence="2"/>
<dbReference type="EMBL" id="AE008922">
    <property type="protein sequence ID" value="AAM40042.1"/>
    <property type="molecule type" value="Genomic_DNA"/>
</dbReference>
<dbReference type="RefSeq" id="NP_636118.1">
    <property type="nucleotide sequence ID" value="NC_003902.1"/>
</dbReference>
<dbReference type="RefSeq" id="WP_011035964.1">
    <property type="nucleotide sequence ID" value="NC_003902.1"/>
</dbReference>
<dbReference type="SMR" id="Q8PCJ8"/>
<dbReference type="STRING" id="190485.XCC0727"/>
<dbReference type="EnsemblBacteria" id="AAM40042">
    <property type="protein sequence ID" value="AAM40042"/>
    <property type="gene ID" value="XCC0727"/>
</dbReference>
<dbReference type="KEGG" id="xcc:XCC0727"/>
<dbReference type="PATRIC" id="fig|190485.4.peg.791"/>
<dbReference type="eggNOG" id="COG1181">
    <property type="taxonomic scope" value="Bacteria"/>
</dbReference>
<dbReference type="HOGENOM" id="CLU_039268_1_2_6"/>
<dbReference type="OrthoDB" id="9813261at2"/>
<dbReference type="UniPathway" id="UPA00219"/>
<dbReference type="Proteomes" id="UP000001010">
    <property type="component" value="Chromosome"/>
</dbReference>
<dbReference type="GO" id="GO:0005829">
    <property type="term" value="C:cytosol"/>
    <property type="evidence" value="ECO:0000318"/>
    <property type="project" value="GO_Central"/>
</dbReference>
<dbReference type="GO" id="GO:0005524">
    <property type="term" value="F:ATP binding"/>
    <property type="evidence" value="ECO:0007669"/>
    <property type="project" value="UniProtKB-KW"/>
</dbReference>
<dbReference type="GO" id="GO:0008716">
    <property type="term" value="F:D-alanine-D-alanine ligase activity"/>
    <property type="evidence" value="ECO:0000318"/>
    <property type="project" value="GO_Central"/>
</dbReference>
<dbReference type="GO" id="GO:0046872">
    <property type="term" value="F:metal ion binding"/>
    <property type="evidence" value="ECO:0007669"/>
    <property type="project" value="UniProtKB-KW"/>
</dbReference>
<dbReference type="GO" id="GO:0071555">
    <property type="term" value="P:cell wall organization"/>
    <property type="evidence" value="ECO:0007669"/>
    <property type="project" value="UniProtKB-KW"/>
</dbReference>
<dbReference type="GO" id="GO:0009252">
    <property type="term" value="P:peptidoglycan biosynthetic process"/>
    <property type="evidence" value="ECO:0000318"/>
    <property type="project" value="GO_Central"/>
</dbReference>
<dbReference type="GO" id="GO:0008360">
    <property type="term" value="P:regulation of cell shape"/>
    <property type="evidence" value="ECO:0007669"/>
    <property type="project" value="UniProtKB-KW"/>
</dbReference>
<dbReference type="FunFam" id="3.30.1490.20:FF:000007">
    <property type="entry name" value="D-alanine--D-alanine ligase"/>
    <property type="match status" value="1"/>
</dbReference>
<dbReference type="FunFam" id="3.30.470.20:FF:000008">
    <property type="entry name" value="D-alanine--D-alanine ligase"/>
    <property type="match status" value="1"/>
</dbReference>
<dbReference type="FunFam" id="3.40.50.20:FF:000013">
    <property type="entry name" value="D-alanine--D-alanine ligase"/>
    <property type="match status" value="1"/>
</dbReference>
<dbReference type="Gene3D" id="3.40.50.20">
    <property type="match status" value="1"/>
</dbReference>
<dbReference type="Gene3D" id="3.30.1490.20">
    <property type="entry name" value="ATP-grasp fold, A domain"/>
    <property type="match status" value="1"/>
</dbReference>
<dbReference type="Gene3D" id="3.30.470.20">
    <property type="entry name" value="ATP-grasp fold, B domain"/>
    <property type="match status" value="1"/>
</dbReference>
<dbReference type="HAMAP" id="MF_00047">
    <property type="entry name" value="Dala_Dala_lig"/>
    <property type="match status" value="1"/>
</dbReference>
<dbReference type="InterPro" id="IPR011761">
    <property type="entry name" value="ATP-grasp"/>
</dbReference>
<dbReference type="InterPro" id="IPR013815">
    <property type="entry name" value="ATP_grasp_subdomain_1"/>
</dbReference>
<dbReference type="InterPro" id="IPR000291">
    <property type="entry name" value="D-Ala_lig_Van_CS"/>
</dbReference>
<dbReference type="InterPro" id="IPR005905">
    <property type="entry name" value="D_ala_D_ala"/>
</dbReference>
<dbReference type="InterPro" id="IPR011095">
    <property type="entry name" value="Dala_Dala_lig_C"/>
</dbReference>
<dbReference type="InterPro" id="IPR011127">
    <property type="entry name" value="Dala_Dala_lig_N"/>
</dbReference>
<dbReference type="InterPro" id="IPR016185">
    <property type="entry name" value="PreATP-grasp_dom_sf"/>
</dbReference>
<dbReference type="NCBIfam" id="TIGR01205">
    <property type="entry name" value="D_ala_D_alaTIGR"/>
    <property type="match status" value="1"/>
</dbReference>
<dbReference type="NCBIfam" id="NF002378">
    <property type="entry name" value="PRK01372.1"/>
    <property type="match status" value="1"/>
</dbReference>
<dbReference type="PANTHER" id="PTHR23132">
    <property type="entry name" value="D-ALANINE--D-ALANINE LIGASE"/>
    <property type="match status" value="1"/>
</dbReference>
<dbReference type="PANTHER" id="PTHR23132:SF23">
    <property type="entry name" value="D-ALANINE--D-ALANINE LIGASE B"/>
    <property type="match status" value="1"/>
</dbReference>
<dbReference type="Pfam" id="PF07478">
    <property type="entry name" value="Dala_Dala_lig_C"/>
    <property type="match status" value="1"/>
</dbReference>
<dbReference type="Pfam" id="PF01820">
    <property type="entry name" value="Dala_Dala_lig_N"/>
    <property type="match status" value="1"/>
</dbReference>
<dbReference type="PIRSF" id="PIRSF039102">
    <property type="entry name" value="Ddl/VanB"/>
    <property type="match status" value="1"/>
</dbReference>
<dbReference type="SUPFAM" id="SSF56059">
    <property type="entry name" value="Glutathione synthetase ATP-binding domain-like"/>
    <property type="match status" value="1"/>
</dbReference>
<dbReference type="SUPFAM" id="SSF52440">
    <property type="entry name" value="PreATP-grasp domain"/>
    <property type="match status" value="1"/>
</dbReference>
<dbReference type="PROSITE" id="PS50975">
    <property type="entry name" value="ATP_GRASP"/>
    <property type="match status" value="1"/>
</dbReference>
<dbReference type="PROSITE" id="PS00843">
    <property type="entry name" value="DALA_DALA_LIGASE_1"/>
    <property type="match status" value="1"/>
</dbReference>
<dbReference type="PROSITE" id="PS00844">
    <property type="entry name" value="DALA_DALA_LIGASE_2"/>
    <property type="match status" value="1"/>
</dbReference>
<evidence type="ECO:0000250" key="1"/>
<evidence type="ECO:0000255" key="2">
    <source>
        <dbReference type="HAMAP-Rule" id="MF_00047"/>
    </source>
</evidence>
<sequence>MSTQIAPARISDPAAFGRVAVLLGGTSSEREVSLNSGSNVLDALRARGVDAQPVDGIPALAQALVAQRFDRVFNVLHGHNGGGEDGIVQGLMEAFGVPYTGSNVLGSALSMDKIRTKQVWLSLGLSTPRYARLAAGASAQQIHAAAEQIGLPVIVKPANEGSSVGVSRVFDQAQLDEAVTLAARYDGALLMEQLIEGDELTVAVLGDVALPSIRIVPKGQWYDYNAKYIAEDTQYLCPGLDGDAEAQIGQLALDAFRAAGCSGWGRVDVMRDGSTGQLYLLEVNTAPGMTSHSLVPKAARQLGIDFEALVWRVLEQTL</sequence>
<keyword id="KW-0067">ATP-binding</keyword>
<keyword id="KW-0133">Cell shape</keyword>
<keyword id="KW-0961">Cell wall biogenesis/degradation</keyword>
<keyword id="KW-0963">Cytoplasm</keyword>
<keyword id="KW-0436">Ligase</keyword>
<keyword id="KW-0460">Magnesium</keyword>
<keyword id="KW-0464">Manganese</keyword>
<keyword id="KW-0479">Metal-binding</keyword>
<keyword id="KW-0547">Nucleotide-binding</keyword>
<keyword id="KW-0573">Peptidoglycan synthesis</keyword>
<keyword id="KW-1185">Reference proteome</keyword>
<protein>
    <recommendedName>
        <fullName evidence="2">D-alanine--D-alanine ligase B</fullName>
        <ecNumber evidence="2">6.3.2.4</ecNumber>
    </recommendedName>
    <alternativeName>
        <fullName evidence="2">D-Ala-D-Ala ligase B</fullName>
    </alternativeName>
    <alternativeName>
        <fullName evidence="2">D-alanylalanine synthetase B</fullName>
    </alternativeName>
</protein>
<gene>
    <name evidence="2" type="primary">ddlB</name>
    <name type="ordered locus">XCC0727</name>
</gene>
<name>DDLB_XANCP</name>
<reference key="1">
    <citation type="journal article" date="2002" name="Nature">
        <title>Comparison of the genomes of two Xanthomonas pathogens with differing host specificities.</title>
        <authorList>
            <person name="da Silva A.C.R."/>
            <person name="Ferro J.A."/>
            <person name="Reinach F.C."/>
            <person name="Farah C.S."/>
            <person name="Furlan L.R."/>
            <person name="Quaggio R.B."/>
            <person name="Monteiro-Vitorello C.B."/>
            <person name="Van Sluys M.A."/>
            <person name="Almeida N.F. Jr."/>
            <person name="Alves L.M.C."/>
            <person name="do Amaral A.M."/>
            <person name="Bertolini M.C."/>
            <person name="Camargo L.E.A."/>
            <person name="Camarotte G."/>
            <person name="Cannavan F."/>
            <person name="Cardozo J."/>
            <person name="Chambergo F."/>
            <person name="Ciapina L.P."/>
            <person name="Cicarelli R.M.B."/>
            <person name="Coutinho L.L."/>
            <person name="Cursino-Santos J.R."/>
            <person name="El-Dorry H."/>
            <person name="Faria J.B."/>
            <person name="Ferreira A.J.S."/>
            <person name="Ferreira R.C.C."/>
            <person name="Ferro M.I.T."/>
            <person name="Formighieri E.F."/>
            <person name="Franco M.C."/>
            <person name="Greggio C.C."/>
            <person name="Gruber A."/>
            <person name="Katsuyama A.M."/>
            <person name="Kishi L.T."/>
            <person name="Leite R.P."/>
            <person name="Lemos E.G.M."/>
            <person name="Lemos M.V.F."/>
            <person name="Locali E.C."/>
            <person name="Machado M.A."/>
            <person name="Madeira A.M.B.N."/>
            <person name="Martinez-Rossi N.M."/>
            <person name="Martins E.C."/>
            <person name="Meidanis J."/>
            <person name="Menck C.F.M."/>
            <person name="Miyaki C.Y."/>
            <person name="Moon D.H."/>
            <person name="Moreira L.M."/>
            <person name="Novo M.T.M."/>
            <person name="Okura V.K."/>
            <person name="Oliveira M.C."/>
            <person name="Oliveira V.R."/>
            <person name="Pereira H.A."/>
            <person name="Rossi A."/>
            <person name="Sena J.A.D."/>
            <person name="Silva C."/>
            <person name="de Souza R.F."/>
            <person name="Spinola L.A.F."/>
            <person name="Takita M.A."/>
            <person name="Tamura R.E."/>
            <person name="Teixeira E.C."/>
            <person name="Tezza R.I.D."/>
            <person name="Trindade dos Santos M."/>
            <person name="Truffi D."/>
            <person name="Tsai S.M."/>
            <person name="White F.F."/>
            <person name="Setubal J.C."/>
            <person name="Kitajima J.P."/>
        </authorList>
    </citation>
    <scope>NUCLEOTIDE SEQUENCE [LARGE SCALE GENOMIC DNA]</scope>
    <source>
        <strain>ATCC 33913 / DSM 3586 / NCPPB 528 / LMG 568 / P 25</strain>
    </source>
</reference>
<accession>Q8PCJ8</accession>
<proteinExistence type="inferred from homology"/>
<comment type="function">
    <text evidence="2">Cell wall formation.</text>
</comment>
<comment type="catalytic activity">
    <reaction evidence="2">
        <text>2 D-alanine + ATP = D-alanyl-D-alanine + ADP + phosphate + H(+)</text>
        <dbReference type="Rhea" id="RHEA:11224"/>
        <dbReference type="ChEBI" id="CHEBI:15378"/>
        <dbReference type="ChEBI" id="CHEBI:30616"/>
        <dbReference type="ChEBI" id="CHEBI:43474"/>
        <dbReference type="ChEBI" id="CHEBI:57416"/>
        <dbReference type="ChEBI" id="CHEBI:57822"/>
        <dbReference type="ChEBI" id="CHEBI:456216"/>
        <dbReference type="EC" id="6.3.2.4"/>
    </reaction>
</comment>
<comment type="cofactor">
    <cofactor evidence="1">
        <name>Mg(2+)</name>
        <dbReference type="ChEBI" id="CHEBI:18420"/>
    </cofactor>
    <cofactor evidence="1">
        <name>Mn(2+)</name>
        <dbReference type="ChEBI" id="CHEBI:29035"/>
    </cofactor>
    <text evidence="1">Binds 2 magnesium or manganese ions per subunit.</text>
</comment>
<comment type="pathway">
    <text evidence="2">Cell wall biogenesis; peptidoglycan biosynthesis.</text>
</comment>
<comment type="subcellular location">
    <subcellularLocation>
        <location evidence="2">Cytoplasm</location>
    </subcellularLocation>
</comment>
<comment type="similarity">
    <text evidence="2">Belongs to the D-alanine--D-alanine ligase family.</text>
</comment>